<feature type="chain" id="PRO_0000087806" description="Uncharacterized MFS-type transporter PA1993">
    <location>
        <begin position="1"/>
        <end position="402"/>
    </location>
</feature>
<feature type="transmembrane region" description="Helical" evidence="1">
    <location>
        <begin position="23"/>
        <end position="43"/>
    </location>
</feature>
<feature type="transmembrane region" description="Helical" evidence="1">
    <location>
        <begin position="52"/>
        <end position="72"/>
    </location>
</feature>
<feature type="transmembrane region" description="Helical" evidence="1">
    <location>
        <begin position="90"/>
        <end position="110"/>
    </location>
</feature>
<feature type="transmembrane region" description="Helical" evidence="1">
    <location>
        <begin position="121"/>
        <end position="141"/>
    </location>
</feature>
<feature type="transmembrane region" description="Helical" evidence="1">
    <location>
        <begin position="158"/>
        <end position="178"/>
    </location>
</feature>
<feature type="transmembrane region" description="Helical" evidence="1">
    <location>
        <begin position="180"/>
        <end position="200"/>
    </location>
</feature>
<feature type="transmembrane region" description="Helical" evidence="1">
    <location>
        <begin position="228"/>
        <end position="248"/>
    </location>
</feature>
<feature type="transmembrane region" description="Helical" evidence="1">
    <location>
        <begin position="255"/>
        <end position="275"/>
    </location>
</feature>
<feature type="transmembrane region" description="Helical" evidence="1">
    <location>
        <begin position="282"/>
        <end position="302"/>
    </location>
</feature>
<feature type="transmembrane region" description="Helical" evidence="1">
    <location>
        <begin position="309"/>
        <end position="329"/>
    </location>
</feature>
<feature type="transmembrane region" description="Helical" evidence="1">
    <location>
        <begin position="351"/>
        <end position="371"/>
    </location>
</feature>
<feature type="transmembrane region" description="Helical" evidence="1">
    <location>
        <begin position="375"/>
        <end position="395"/>
    </location>
</feature>
<name>Y1993_PSEAE</name>
<reference key="1">
    <citation type="journal article" date="2000" name="Nature">
        <title>Complete genome sequence of Pseudomonas aeruginosa PAO1, an opportunistic pathogen.</title>
        <authorList>
            <person name="Stover C.K."/>
            <person name="Pham X.-Q.T."/>
            <person name="Erwin A.L."/>
            <person name="Mizoguchi S.D."/>
            <person name="Warrener P."/>
            <person name="Hickey M.J."/>
            <person name="Brinkman F.S.L."/>
            <person name="Hufnagle W.O."/>
            <person name="Kowalik D.J."/>
            <person name="Lagrou M."/>
            <person name="Garber R.L."/>
            <person name="Goltry L."/>
            <person name="Tolentino E."/>
            <person name="Westbrock-Wadman S."/>
            <person name="Yuan Y."/>
            <person name="Brody L.L."/>
            <person name="Coulter S.N."/>
            <person name="Folger K.R."/>
            <person name="Kas A."/>
            <person name="Larbig K."/>
            <person name="Lim R.M."/>
            <person name="Smith K.A."/>
            <person name="Spencer D.H."/>
            <person name="Wong G.K.-S."/>
            <person name="Wu Z."/>
            <person name="Paulsen I.T."/>
            <person name="Reizer J."/>
            <person name="Saier M.H. Jr."/>
            <person name="Hancock R.E.W."/>
            <person name="Lory S."/>
            <person name="Olson M.V."/>
        </authorList>
    </citation>
    <scope>NUCLEOTIDE SEQUENCE [LARGE SCALE GENOMIC DNA]</scope>
    <source>
        <strain>ATCC 15692 / DSM 22644 / CIP 104116 / JCM 14847 / LMG 12228 / 1C / PRS 101 / PAO1</strain>
    </source>
</reference>
<sequence>MSVDIRPTPPAQDSARQNVTLQIVSVVMFTFIGYLTIGIPLAVLPGYVHDDLGYGSVLAGLVISLQYLATLLARPYAGRVIDGLGPKRAVLYGMAGSAASGLFMLLSVAIQGWPALSLASLLVGRLVLGAAESLVGSAAIGWGIGRVGAPHTAKVISWNGIASYGAIALGAPLGVLLVQWLGLWSMGASIVLLGALGFALAWPKLPAPLVHGERLPFHHVLGRVTPHGMGLALGAIGFGTIATFITLYYASRGWANAVLCLSAFGGCFIGARLLFANSINRLGGFRVAIICLGVESLGLLLLWSAPNPWVGLAGAALTGFGFSLVFPAFGVEAVNLVPASNRGAALGAYSLFVDLSLGITGPLVGFVANLFGFRSMFLFACLASLGGLALAVALHRRSRRPG</sequence>
<accession>Q9I2B6</accession>
<comment type="subcellular location">
    <subcellularLocation>
        <location evidence="1">Cell inner membrane</location>
        <topology evidence="1">Multi-pass membrane protein</topology>
    </subcellularLocation>
</comment>
<comment type="similarity">
    <text evidence="1">Belongs to the major facilitator superfamily. YhhS family.</text>
</comment>
<gene>
    <name type="ordered locus">PA1993</name>
</gene>
<keyword id="KW-0997">Cell inner membrane</keyword>
<keyword id="KW-1003">Cell membrane</keyword>
<keyword id="KW-0472">Membrane</keyword>
<keyword id="KW-1185">Reference proteome</keyword>
<keyword id="KW-0812">Transmembrane</keyword>
<keyword id="KW-1133">Transmembrane helix</keyword>
<keyword id="KW-0813">Transport</keyword>
<dbReference type="EMBL" id="AE004091">
    <property type="protein sequence ID" value="AAG05381.1"/>
    <property type="molecule type" value="Genomic_DNA"/>
</dbReference>
<dbReference type="PIR" id="A83398">
    <property type="entry name" value="A83398"/>
</dbReference>
<dbReference type="RefSeq" id="NP_250683.1">
    <property type="nucleotide sequence ID" value="NC_002516.2"/>
</dbReference>
<dbReference type="RefSeq" id="WP_003113497.1">
    <property type="nucleotide sequence ID" value="NZ_QZGE01000026.1"/>
</dbReference>
<dbReference type="SMR" id="Q9I2B6"/>
<dbReference type="FunCoup" id="Q9I2B6">
    <property type="interactions" value="66"/>
</dbReference>
<dbReference type="STRING" id="208964.PA1993"/>
<dbReference type="PaxDb" id="208964-PA1993"/>
<dbReference type="GeneID" id="880155"/>
<dbReference type="KEGG" id="pae:PA1993"/>
<dbReference type="PATRIC" id="fig|208964.12.peg.2077"/>
<dbReference type="PseudoCAP" id="PA1993"/>
<dbReference type="HOGENOM" id="CLU_001265_10_3_6"/>
<dbReference type="InParanoid" id="Q9I2B6"/>
<dbReference type="OrthoDB" id="322544at2"/>
<dbReference type="PhylomeDB" id="Q9I2B6"/>
<dbReference type="BioCyc" id="PAER208964:G1FZ6-2031-MONOMER"/>
<dbReference type="Proteomes" id="UP000002438">
    <property type="component" value="Chromosome"/>
</dbReference>
<dbReference type="GO" id="GO:0005886">
    <property type="term" value="C:plasma membrane"/>
    <property type="evidence" value="ECO:0000318"/>
    <property type="project" value="GO_Central"/>
</dbReference>
<dbReference type="GO" id="GO:0022857">
    <property type="term" value="F:transmembrane transporter activity"/>
    <property type="evidence" value="ECO:0007669"/>
    <property type="project" value="UniProtKB-UniRule"/>
</dbReference>
<dbReference type="CDD" id="cd17489">
    <property type="entry name" value="MFS_YfcJ_like"/>
    <property type="match status" value="1"/>
</dbReference>
<dbReference type="Gene3D" id="1.20.1250.20">
    <property type="entry name" value="MFS general substrate transporter like domains"/>
    <property type="match status" value="1"/>
</dbReference>
<dbReference type="HAMAP" id="MF_01118">
    <property type="entry name" value="MFS_YhhS"/>
    <property type="match status" value="1"/>
</dbReference>
<dbReference type="InterPro" id="IPR011701">
    <property type="entry name" value="MFS"/>
</dbReference>
<dbReference type="InterPro" id="IPR020846">
    <property type="entry name" value="MFS_dom"/>
</dbReference>
<dbReference type="InterPro" id="IPR036259">
    <property type="entry name" value="MFS_trans_sf"/>
</dbReference>
<dbReference type="InterPro" id="IPR050171">
    <property type="entry name" value="MFS_Transporters"/>
</dbReference>
<dbReference type="InterPro" id="IPR023008">
    <property type="entry name" value="MFS_YhhS-like"/>
</dbReference>
<dbReference type="NCBIfam" id="NF003477">
    <property type="entry name" value="PRK05122.1"/>
    <property type="match status" value="1"/>
</dbReference>
<dbReference type="NCBIfam" id="NF009048">
    <property type="entry name" value="PRK12382.1"/>
    <property type="match status" value="1"/>
</dbReference>
<dbReference type="PANTHER" id="PTHR23517:SF13">
    <property type="entry name" value="MAJOR FACILITATOR SUPERFAMILY MFS_1"/>
    <property type="match status" value="1"/>
</dbReference>
<dbReference type="PANTHER" id="PTHR23517">
    <property type="entry name" value="RESISTANCE PROTEIN MDTM, PUTATIVE-RELATED-RELATED"/>
    <property type="match status" value="1"/>
</dbReference>
<dbReference type="Pfam" id="PF07690">
    <property type="entry name" value="MFS_1"/>
    <property type="match status" value="1"/>
</dbReference>
<dbReference type="SUPFAM" id="SSF103473">
    <property type="entry name" value="MFS general substrate transporter"/>
    <property type="match status" value="1"/>
</dbReference>
<dbReference type="PROSITE" id="PS50850">
    <property type="entry name" value="MFS"/>
    <property type="match status" value="1"/>
</dbReference>
<protein>
    <recommendedName>
        <fullName evidence="1">Uncharacterized MFS-type transporter PA1993</fullName>
    </recommendedName>
</protein>
<proteinExistence type="inferred from homology"/>
<evidence type="ECO:0000255" key="1">
    <source>
        <dbReference type="HAMAP-Rule" id="MF_01118"/>
    </source>
</evidence>
<organism>
    <name type="scientific">Pseudomonas aeruginosa (strain ATCC 15692 / DSM 22644 / CIP 104116 / JCM 14847 / LMG 12228 / 1C / PRS 101 / PAO1)</name>
    <dbReference type="NCBI Taxonomy" id="208964"/>
    <lineage>
        <taxon>Bacteria</taxon>
        <taxon>Pseudomonadati</taxon>
        <taxon>Pseudomonadota</taxon>
        <taxon>Gammaproteobacteria</taxon>
        <taxon>Pseudomonadales</taxon>
        <taxon>Pseudomonadaceae</taxon>
        <taxon>Pseudomonas</taxon>
    </lineage>
</organism>